<geneLocation type="mitochondrion"/>
<proteinExistence type="inferred from homology"/>
<protein>
    <recommendedName>
        <fullName>Cytochrome b</fullName>
    </recommendedName>
    <alternativeName>
        <fullName>Complex III subunit 3</fullName>
    </alternativeName>
    <alternativeName>
        <fullName>Complex III subunit III</fullName>
    </alternativeName>
    <alternativeName>
        <fullName>Cytochrome b-c1 complex subunit 3</fullName>
    </alternativeName>
    <alternativeName>
        <fullName>Ubiquinol-cytochrome-c reductase complex cytochrome b subunit</fullName>
    </alternativeName>
</protein>
<accession>Q7YC73</accession>
<accession>Q7YC72</accession>
<feature type="chain" id="PRO_0000254984" description="Cytochrome b">
    <location>
        <begin position="1"/>
        <end position="381"/>
    </location>
</feature>
<feature type="transmembrane region" description="Helical" evidence="2">
    <location>
        <begin position="33"/>
        <end position="53"/>
    </location>
</feature>
<feature type="transmembrane region" description="Helical" evidence="2">
    <location>
        <begin position="77"/>
        <end position="98"/>
    </location>
</feature>
<feature type="transmembrane region" description="Helical" evidence="2">
    <location>
        <begin position="113"/>
        <end position="133"/>
    </location>
</feature>
<feature type="transmembrane region" description="Helical" evidence="2">
    <location>
        <begin position="178"/>
        <end position="198"/>
    </location>
</feature>
<feature type="transmembrane region" description="Helical" evidence="2">
    <location>
        <begin position="226"/>
        <end position="246"/>
    </location>
</feature>
<feature type="transmembrane region" description="Helical" evidence="2">
    <location>
        <begin position="288"/>
        <end position="308"/>
    </location>
</feature>
<feature type="transmembrane region" description="Helical" evidence="2">
    <location>
        <begin position="320"/>
        <end position="340"/>
    </location>
</feature>
<feature type="transmembrane region" description="Helical" evidence="2">
    <location>
        <begin position="347"/>
        <end position="367"/>
    </location>
</feature>
<feature type="binding site" description="axial binding residue" evidence="2">
    <location>
        <position position="83"/>
    </location>
    <ligand>
        <name>heme b</name>
        <dbReference type="ChEBI" id="CHEBI:60344"/>
        <label>b562</label>
    </ligand>
    <ligandPart>
        <name>Fe</name>
        <dbReference type="ChEBI" id="CHEBI:18248"/>
    </ligandPart>
</feature>
<feature type="binding site" description="axial binding residue" evidence="2">
    <location>
        <position position="97"/>
    </location>
    <ligand>
        <name>heme b</name>
        <dbReference type="ChEBI" id="CHEBI:60344"/>
        <label>b566</label>
    </ligand>
    <ligandPart>
        <name>Fe</name>
        <dbReference type="ChEBI" id="CHEBI:18248"/>
    </ligandPart>
</feature>
<feature type="binding site" description="axial binding residue" evidence="2">
    <location>
        <position position="182"/>
    </location>
    <ligand>
        <name>heme b</name>
        <dbReference type="ChEBI" id="CHEBI:60344"/>
        <label>b562</label>
    </ligand>
    <ligandPart>
        <name>Fe</name>
        <dbReference type="ChEBI" id="CHEBI:18248"/>
    </ligandPart>
</feature>
<feature type="binding site" description="axial binding residue" evidence="2">
    <location>
        <position position="196"/>
    </location>
    <ligand>
        <name>heme b</name>
        <dbReference type="ChEBI" id="CHEBI:60344"/>
        <label>b566</label>
    </ligand>
    <ligandPart>
        <name>Fe</name>
        <dbReference type="ChEBI" id="CHEBI:18248"/>
    </ligandPart>
</feature>
<feature type="binding site" evidence="2">
    <location>
        <position position="201"/>
    </location>
    <ligand>
        <name>a ubiquinone</name>
        <dbReference type="ChEBI" id="CHEBI:16389"/>
    </ligand>
</feature>
<feature type="sequence variant" description="In strain: Isolate FMNH 167358.">
    <original>L</original>
    <variation>F</variation>
    <location>
        <position position="233"/>
    </location>
</feature>
<gene>
    <name type="primary">MT-CYB</name>
    <name type="synonym">COB</name>
    <name type="synonym">CYTB</name>
    <name type="synonym">MTCYB</name>
</gene>
<name>CYB_APODA</name>
<organism>
    <name type="scientific">Apomys datae</name>
    <name type="common">Luzon montane forest mouse</name>
    <dbReference type="NCBI Taxonomy" id="238002"/>
    <lineage>
        <taxon>Eukaryota</taxon>
        <taxon>Metazoa</taxon>
        <taxon>Chordata</taxon>
        <taxon>Craniata</taxon>
        <taxon>Vertebrata</taxon>
        <taxon>Euteleostomi</taxon>
        <taxon>Mammalia</taxon>
        <taxon>Eutheria</taxon>
        <taxon>Euarchontoglires</taxon>
        <taxon>Glires</taxon>
        <taxon>Rodentia</taxon>
        <taxon>Myomorpha</taxon>
        <taxon>Muroidea</taxon>
        <taxon>Muridae</taxon>
        <taxon>Murinae</taxon>
        <taxon>Apomys</taxon>
    </lineage>
</organism>
<reference key="1">
    <citation type="journal article" date="2003" name="Biol. J. Linn. Soc. Lond.">
        <title>Molecular phylogeny of the endemic Philippine rodent Apomys (Muridae) and the dynamics of diversification in an oceanic archipelago.</title>
        <authorList>
            <person name="Steppan S.J."/>
            <person name="Zawadzki C."/>
            <person name="Heaney L.R."/>
        </authorList>
    </citation>
    <scope>NUCLEOTIDE SEQUENCE [GENOMIC DNA]</scope>
    <source>
        <strain>Isolate FMNH 167243</strain>
        <strain>Isolate FMNH 167358</strain>
    </source>
</reference>
<sequence length="381" mass="43142">MTNIRKTHPLIKIINHSFIDLPAPSNISSWWNFGSLLGLCLMIQIITGLFLAMHYTSDTTTAFSSVTHICRDVNYGWLIRYMHANGASMFFICLFLHVGRGMYYGSYTFMETWNIGIILLFATMATAFMGYVLPWGQMSFWGATVITNLLSAIPYIGTTLVEWIWGGFSVDKATLTRFFAFHFILPFIIAALVIVHLLFLHETGSNNPTGLNSDADKIPFHPYYTIKDLLGVLMLILFLMTLVLFFPDLLGDPDNYTPANPLNTPPHIKPEWYFLFAYAILRSIPNKLGGVLALILSILILAFLPFLHTSKQRSLMFRPITQVLYWMLAANLLILTWIGGQPVEHPFIIIGQLASISYFSIILILMPISGIIEDKLLKWSL</sequence>
<comment type="function">
    <text evidence="2">Component of the ubiquinol-cytochrome c reductase complex (complex III or cytochrome b-c1 complex) that is part of the mitochondrial respiratory chain. The b-c1 complex mediates electron transfer from ubiquinol to cytochrome c. Contributes to the generation of a proton gradient across the mitochondrial membrane that is then used for ATP synthesis.</text>
</comment>
<comment type="cofactor">
    <cofactor evidence="2">
        <name>heme b</name>
        <dbReference type="ChEBI" id="CHEBI:60344"/>
    </cofactor>
    <text evidence="2">Binds 2 heme b groups non-covalently.</text>
</comment>
<comment type="subunit">
    <text evidence="2">The cytochrome bc1 complex contains 11 subunits: 3 respiratory subunits (MT-CYB, CYC1 and UQCRFS1), 2 core proteins (UQCRC1 and UQCRC2) and 6 low-molecular weight proteins (UQCRH/QCR6, UQCRB/QCR7, UQCRQ/QCR8, UQCR10/QCR9, UQCR11/QCR10 and a cleavage product of UQCRFS1). This cytochrome bc1 complex then forms a dimer.</text>
</comment>
<comment type="subcellular location">
    <subcellularLocation>
        <location evidence="2">Mitochondrion inner membrane</location>
        <topology evidence="2">Multi-pass membrane protein</topology>
    </subcellularLocation>
</comment>
<comment type="miscellaneous">
    <text evidence="1">Heme 1 (or BL or b562) is low-potential and absorbs at about 562 nm, and heme 2 (or BH or b566) is high-potential and absorbs at about 566 nm.</text>
</comment>
<comment type="similarity">
    <text evidence="3 4">Belongs to the cytochrome b family.</text>
</comment>
<comment type="caution">
    <text evidence="2">The full-length protein contains only eight transmembrane helices, not nine as predicted by bioinformatics tools.</text>
</comment>
<dbReference type="EMBL" id="AY324463">
    <property type="protein sequence ID" value="AAP88708.2"/>
    <property type="molecule type" value="Genomic_DNA"/>
</dbReference>
<dbReference type="EMBL" id="AY324464">
    <property type="protein sequence ID" value="AAP88709.2"/>
    <property type="molecule type" value="Genomic_DNA"/>
</dbReference>
<dbReference type="SMR" id="Q7YC73"/>
<dbReference type="GO" id="GO:0005743">
    <property type="term" value="C:mitochondrial inner membrane"/>
    <property type="evidence" value="ECO:0007669"/>
    <property type="project" value="UniProtKB-SubCell"/>
</dbReference>
<dbReference type="GO" id="GO:0045275">
    <property type="term" value="C:respiratory chain complex III"/>
    <property type="evidence" value="ECO:0007669"/>
    <property type="project" value="InterPro"/>
</dbReference>
<dbReference type="GO" id="GO:0046872">
    <property type="term" value="F:metal ion binding"/>
    <property type="evidence" value="ECO:0007669"/>
    <property type="project" value="UniProtKB-KW"/>
</dbReference>
<dbReference type="GO" id="GO:0008121">
    <property type="term" value="F:ubiquinol-cytochrome-c reductase activity"/>
    <property type="evidence" value="ECO:0007669"/>
    <property type="project" value="InterPro"/>
</dbReference>
<dbReference type="GO" id="GO:0006122">
    <property type="term" value="P:mitochondrial electron transport, ubiquinol to cytochrome c"/>
    <property type="evidence" value="ECO:0007669"/>
    <property type="project" value="TreeGrafter"/>
</dbReference>
<dbReference type="CDD" id="cd00290">
    <property type="entry name" value="cytochrome_b_C"/>
    <property type="match status" value="1"/>
</dbReference>
<dbReference type="CDD" id="cd00284">
    <property type="entry name" value="Cytochrome_b_N"/>
    <property type="match status" value="1"/>
</dbReference>
<dbReference type="FunFam" id="1.20.810.10:FF:000002">
    <property type="entry name" value="Cytochrome b"/>
    <property type="match status" value="1"/>
</dbReference>
<dbReference type="Gene3D" id="1.20.810.10">
    <property type="entry name" value="Cytochrome Bc1 Complex, Chain C"/>
    <property type="match status" value="1"/>
</dbReference>
<dbReference type="InterPro" id="IPR005798">
    <property type="entry name" value="Cyt_b/b6_C"/>
</dbReference>
<dbReference type="InterPro" id="IPR036150">
    <property type="entry name" value="Cyt_b/b6_C_sf"/>
</dbReference>
<dbReference type="InterPro" id="IPR005797">
    <property type="entry name" value="Cyt_b/b6_N"/>
</dbReference>
<dbReference type="InterPro" id="IPR027387">
    <property type="entry name" value="Cytb/b6-like_sf"/>
</dbReference>
<dbReference type="InterPro" id="IPR030689">
    <property type="entry name" value="Cytochrome_b"/>
</dbReference>
<dbReference type="InterPro" id="IPR048260">
    <property type="entry name" value="Cytochrome_b_C_euk/bac"/>
</dbReference>
<dbReference type="InterPro" id="IPR048259">
    <property type="entry name" value="Cytochrome_b_N_euk/bac"/>
</dbReference>
<dbReference type="InterPro" id="IPR016174">
    <property type="entry name" value="Di-haem_cyt_TM"/>
</dbReference>
<dbReference type="PANTHER" id="PTHR19271">
    <property type="entry name" value="CYTOCHROME B"/>
    <property type="match status" value="1"/>
</dbReference>
<dbReference type="PANTHER" id="PTHR19271:SF16">
    <property type="entry name" value="CYTOCHROME B"/>
    <property type="match status" value="1"/>
</dbReference>
<dbReference type="Pfam" id="PF00032">
    <property type="entry name" value="Cytochrom_B_C"/>
    <property type="match status" value="1"/>
</dbReference>
<dbReference type="Pfam" id="PF00033">
    <property type="entry name" value="Cytochrome_B"/>
    <property type="match status" value="1"/>
</dbReference>
<dbReference type="PIRSF" id="PIRSF038885">
    <property type="entry name" value="COB"/>
    <property type="match status" value="1"/>
</dbReference>
<dbReference type="SUPFAM" id="SSF81648">
    <property type="entry name" value="a domain/subunit of cytochrome bc1 complex (Ubiquinol-cytochrome c reductase)"/>
    <property type="match status" value="1"/>
</dbReference>
<dbReference type="SUPFAM" id="SSF81342">
    <property type="entry name" value="Transmembrane di-heme cytochromes"/>
    <property type="match status" value="1"/>
</dbReference>
<dbReference type="PROSITE" id="PS51003">
    <property type="entry name" value="CYTB_CTER"/>
    <property type="match status" value="1"/>
</dbReference>
<dbReference type="PROSITE" id="PS51002">
    <property type="entry name" value="CYTB_NTER"/>
    <property type="match status" value="1"/>
</dbReference>
<keyword id="KW-0249">Electron transport</keyword>
<keyword id="KW-0349">Heme</keyword>
<keyword id="KW-0408">Iron</keyword>
<keyword id="KW-0472">Membrane</keyword>
<keyword id="KW-0479">Metal-binding</keyword>
<keyword id="KW-0496">Mitochondrion</keyword>
<keyword id="KW-0999">Mitochondrion inner membrane</keyword>
<keyword id="KW-0679">Respiratory chain</keyword>
<keyword id="KW-0812">Transmembrane</keyword>
<keyword id="KW-1133">Transmembrane helix</keyword>
<keyword id="KW-0813">Transport</keyword>
<keyword id="KW-0830">Ubiquinone</keyword>
<evidence type="ECO:0000250" key="1"/>
<evidence type="ECO:0000250" key="2">
    <source>
        <dbReference type="UniProtKB" id="P00157"/>
    </source>
</evidence>
<evidence type="ECO:0000255" key="3">
    <source>
        <dbReference type="PROSITE-ProRule" id="PRU00967"/>
    </source>
</evidence>
<evidence type="ECO:0000255" key="4">
    <source>
        <dbReference type="PROSITE-ProRule" id="PRU00968"/>
    </source>
</evidence>